<protein>
    <recommendedName>
        <fullName evidence="5">LRP chaperone MESD</fullName>
    </recommendedName>
    <alternativeName>
        <fullName>LDLR chaperone MESD</fullName>
    </alternativeName>
    <alternativeName>
        <fullName>Mesoderm development candidate 2</fullName>
    </alternativeName>
    <alternativeName>
        <fullName>Mesoderm development protein</fullName>
    </alternativeName>
</protein>
<accession>Q5ZKK4</accession>
<evidence type="ECO:0000250" key="1"/>
<evidence type="ECO:0000250" key="2">
    <source>
        <dbReference type="UniProtKB" id="Q9ERE7"/>
    </source>
</evidence>
<evidence type="ECO:0000255" key="3"/>
<evidence type="ECO:0000256" key="4">
    <source>
        <dbReference type="SAM" id="MobiDB-lite"/>
    </source>
</evidence>
<evidence type="ECO:0000305" key="5"/>
<name>MESD_CHICK</name>
<feature type="signal peptide" evidence="3">
    <location>
        <begin position="1"/>
        <end position="22"/>
    </location>
</feature>
<feature type="chain" id="PRO_0000385019" description="LRP chaperone MESD">
    <location>
        <begin position="23"/>
        <end position="220"/>
    </location>
</feature>
<feature type="region of interest" description="Disordered" evidence="4">
    <location>
        <begin position="56"/>
        <end position="77"/>
    </location>
</feature>
<feature type="region of interest" description="Structured core" evidence="1">
    <location>
        <begin position="97"/>
        <end position="170"/>
    </location>
</feature>
<feature type="region of interest" description="Disordered" evidence="4">
    <location>
        <begin position="172"/>
        <end position="220"/>
    </location>
</feature>
<feature type="short sequence motif" description="Prevents secretion from ER">
    <location>
        <begin position="217"/>
        <end position="220"/>
    </location>
</feature>
<feature type="compositionally biased region" description="Basic and acidic residues" evidence="4">
    <location>
        <begin position="180"/>
        <end position="220"/>
    </location>
</feature>
<feature type="glycosylation site" description="N-linked (GlcNAc...) asparagine" evidence="3">
    <location>
        <position position="187"/>
    </location>
</feature>
<dbReference type="EMBL" id="AJ720080">
    <property type="protein sequence ID" value="CAG31739.1"/>
    <property type="status" value="ALT_FRAME"/>
    <property type="molecule type" value="mRNA"/>
</dbReference>
<dbReference type="EMBL" id="DR420681">
    <property type="status" value="NOT_ANNOTATED_CDS"/>
    <property type="molecule type" value="mRNA"/>
</dbReference>
<dbReference type="SMR" id="Q5ZKK4"/>
<dbReference type="BioGRID" id="677117">
    <property type="interactions" value="1"/>
</dbReference>
<dbReference type="FunCoup" id="Q5ZKK4">
    <property type="interactions" value="2811"/>
</dbReference>
<dbReference type="IntAct" id="Q5ZKK4">
    <property type="interactions" value="1"/>
</dbReference>
<dbReference type="STRING" id="9031.ENSGALP00000041764"/>
<dbReference type="GlyCosmos" id="Q5ZKK4">
    <property type="glycosylation" value="1 site, No reported glycans"/>
</dbReference>
<dbReference type="GlyGen" id="Q5ZKK4">
    <property type="glycosylation" value="1 site"/>
</dbReference>
<dbReference type="PaxDb" id="9031-ENSGALP00000010323"/>
<dbReference type="VEuPathDB" id="HostDB:geneid_415475"/>
<dbReference type="eggNOG" id="KOG4357">
    <property type="taxonomic scope" value="Eukaryota"/>
</dbReference>
<dbReference type="HOGENOM" id="CLU_111621_0_0_1"/>
<dbReference type="InParanoid" id="Q5ZKK4"/>
<dbReference type="PhylomeDB" id="Q5ZKK4"/>
<dbReference type="Proteomes" id="UP000000539">
    <property type="component" value="Unassembled WGS sequence"/>
</dbReference>
<dbReference type="GO" id="GO:0005783">
    <property type="term" value="C:endoplasmic reticulum"/>
    <property type="evidence" value="ECO:0007669"/>
    <property type="project" value="UniProtKB-SubCell"/>
</dbReference>
<dbReference type="GO" id="GO:0050750">
    <property type="term" value="F:low-density lipoprotein particle receptor binding"/>
    <property type="evidence" value="ECO:0000318"/>
    <property type="project" value="GO_Central"/>
</dbReference>
<dbReference type="GO" id="GO:0006457">
    <property type="term" value="P:protein folding"/>
    <property type="evidence" value="ECO:0007669"/>
    <property type="project" value="InterPro"/>
</dbReference>
<dbReference type="GO" id="GO:0016055">
    <property type="term" value="P:Wnt signaling pathway"/>
    <property type="evidence" value="ECO:0007669"/>
    <property type="project" value="UniProtKB-KW"/>
</dbReference>
<dbReference type="FunFam" id="3.30.70.260:FF:000031">
    <property type="entry name" value="LDLR chaperone MESD"/>
    <property type="match status" value="1"/>
</dbReference>
<dbReference type="Gene3D" id="3.30.70.260">
    <property type="match status" value="1"/>
</dbReference>
<dbReference type="Gene3D" id="6.10.250.640">
    <property type="match status" value="1"/>
</dbReference>
<dbReference type="InterPro" id="IPR019330">
    <property type="entry name" value="MESD"/>
</dbReference>
<dbReference type="PANTHER" id="PTHR17600:SF2">
    <property type="entry name" value="LRP CHAPERONE MESD"/>
    <property type="match status" value="1"/>
</dbReference>
<dbReference type="PANTHER" id="PTHR17600">
    <property type="entry name" value="MESODERM DEVELOPMENT CANDIDATE 2"/>
    <property type="match status" value="1"/>
</dbReference>
<dbReference type="Pfam" id="PF10185">
    <property type="entry name" value="Mesd"/>
    <property type="match status" value="1"/>
</dbReference>
<reference key="1">
    <citation type="journal article" date="2005" name="Genome Biol.">
        <title>Full-length cDNAs from chicken bursal lymphocytes to facilitate gene function analysis.</title>
        <authorList>
            <person name="Caldwell R.B."/>
            <person name="Kierzek A.M."/>
            <person name="Arakawa H."/>
            <person name="Bezzubov Y."/>
            <person name="Zaim J."/>
            <person name="Fiedler P."/>
            <person name="Kutter S."/>
            <person name="Blagodatski A."/>
            <person name="Kostovska D."/>
            <person name="Koter M."/>
            <person name="Plachy J."/>
            <person name="Carninci P."/>
            <person name="Hayashizaki Y."/>
            <person name="Buerstedde J.-M."/>
        </authorList>
    </citation>
    <scope>NUCLEOTIDE SEQUENCE [LARGE SCALE MRNA]</scope>
    <source>
        <strain>CB</strain>
        <tissue>Bursa of Fabricius</tissue>
    </source>
</reference>
<reference key="2">
    <citation type="journal article" date="2006" name="BMC Genomics">
        <title>Gene expression profiling of chicken primordial germ cell ESTs.</title>
        <authorList>
            <person name="Han J.Y."/>
            <person name="Park T.S."/>
            <person name="Kim J.N."/>
            <person name="Kim M.A."/>
            <person name="Lim D."/>
            <person name="Lim J.M."/>
            <person name="Kim H."/>
        </authorList>
    </citation>
    <scope>NUCLEOTIDE SEQUENCE [LARGE SCALE MRNA]</scope>
    <source>
        <strain>White leghorn</strain>
        <tissue>Embryo</tissue>
    </source>
</reference>
<keyword id="KW-0143">Chaperone</keyword>
<keyword id="KW-0256">Endoplasmic reticulum</keyword>
<keyword id="KW-0325">Glycoprotein</keyword>
<keyword id="KW-1185">Reference proteome</keyword>
<keyword id="KW-0732">Signal</keyword>
<keyword id="KW-0879">Wnt signaling pathway</keyword>
<sequence length="220" mass="24692">MAAAARWAALGLALWLCAAAHAEEPEGKRRAGPAKKKDIRDYNDADMARLLEQWEKDDDIEEGDLPEHKRPPAPIDFSKIDPGKPESILKLTKKGKTLMMFVTVSGNPTEKETEEITSLWQGSLFNANYDVQRFIVGSNRAIFMLRDGGYAWEIKDFLISQERCADVTLEGQVYPGKGADGSEKGRNKTKPEKAKKKKDAEKSKSSHEDNRAQTKQREDL</sequence>
<gene>
    <name type="primary">mesd</name>
    <name type="synonym">mesdc2</name>
    <name type="ORF">RCJMB04_10e14</name>
</gene>
<proteinExistence type="evidence at transcript level"/>
<comment type="function">
    <text evidence="2">Chaperone specifically assisting the folding of beta-propeller/EGF modules within the family of low-density lipoprotein receptors (LDLRs). Acts as a modulator of the Wnt pathway, since some LDLRs are coreceptors for the canonical Wnt pathway (By similarity).</text>
</comment>
<comment type="subunit">
    <text evidence="2">Monomer.</text>
</comment>
<comment type="subcellular location">
    <subcellularLocation>
        <location evidence="2">Endoplasmic reticulum</location>
    </subcellularLocation>
</comment>
<comment type="similarity">
    <text evidence="5">Belongs to the MESD family.</text>
</comment>
<comment type="sequence caution" evidence="5">
    <conflict type="frameshift">
        <sequence resource="EMBL-CDS" id="CAG31739"/>
    </conflict>
</comment>
<organism>
    <name type="scientific">Gallus gallus</name>
    <name type="common">Chicken</name>
    <dbReference type="NCBI Taxonomy" id="9031"/>
    <lineage>
        <taxon>Eukaryota</taxon>
        <taxon>Metazoa</taxon>
        <taxon>Chordata</taxon>
        <taxon>Craniata</taxon>
        <taxon>Vertebrata</taxon>
        <taxon>Euteleostomi</taxon>
        <taxon>Archelosauria</taxon>
        <taxon>Archosauria</taxon>
        <taxon>Dinosauria</taxon>
        <taxon>Saurischia</taxon>
        <taxon>Theropoda</taxon>
        <taxon>Coelurosauria</taxon>
        <taxon>Aves</taxon>
        <taxon>Neognathae</taxon>
        <taxon>Galloanserae</taxon>
        <taxon>Galliformes</taxon>
        <taxon>Phasianidae</taxon>
        <taxon>Phasianinae</taxon>
        <taxon>Gallus</taxon>
    </lineage>
</organism>